<organism>
    <name type="scientific">Curcuma longa</name>
    <name type="common">Turmeric</name>
    <name type="synonym">Curcuma domestica</name>
    <dbReference type="NCBI Taxonomy" id="136217"/>
    <lineage>
        <taxon>Eukaryota</taxon>
        <taxon>Viridiplantae</taxon>
        <taxon>Streptophyta</taxon>
        <taxon>Embryophyta</taxon>
        <taxon>Tracheophyta</taxon>
        <taxon>Spermatophyta</taxon>
        <taxon>Magnoliopsida</taxon>
        <taxon>Liliopsida</taxon>
        <taxon>Zingiberales</taxon>
        <taxon>Zingiberaceae</taxon>
        <taxon>Curcuma</taxon>
    </lineage>
</organism>
<name>TURM_CURLO</name>
<proteinExistence type="evidence at protein level"/>
<protein>
    <recommendedName>
        <fullName>Turmerin</fullName>
    </recommendedName>
</protein>
<reference evidence="7" key="1">
    <citation type="submission" date="2007-10" db="UniProtKB">
        <title>BGS turmerin a unique antioxidant protein from Turmeric (Curcuma longa L.).</title>
        <authorList>
            <person name="Srinivas L."/>
            <person name="Chethankumar M."/>
            <person name="Sampathkumar S."/>
        </authorList>
    </citation>
    <scope>PROTEIN SEQUENCE</scope>
    <scope>FUNCTION</scope>
    <source>
        <tissue evidence="5">Rhizome</tissue>
    </source>
</reference>
<reference evidence="7" key="2">
    <citation type="journal article" date="1992" name="Arch. Biochem. Biophys.">
        <title>Turmerin: a water soluble antioxidant peptide from turmeric [Curcuma longa].</title>
        <authorList>
            <person name="Srinivas L."/>
            <person name="Shalini V.K."/>
            <person name="Shylaja M."/>
        </authorList>
    </citation>
    <scope>FUNCTION</scope>
    <scope>BIOPHYSICOCHEMICAL PROPERTIES</scope>
    <scope>BLOCKAGE OF N-TERMINUS</scope>
</reference>
<reference evidence="7" key="3">
    <citation type="journal article" date="2008" name="Biol. Chem.">
        <title>New biological activity against phospholipase A2 by Turmerin, a protein from Curcuma longa L.</title>
        <authorList>
            <person name="Chethankumar M."/>
            <person name="Srinivas L."/>
        </authorList>
    </citation>
    <scope>FUNCTION</scope>
    <scope>MASS SPECTROMETRY</scope>
</reference>
<dbReference type="GO" id="GO:0016209">
    <property type="term" value="F:antioxidant activity"/>
    <property type="evidence" value="ECO:0007669"/>
    <property type="project" value="UniProtKB-KW"/>
</dbReference>
<dbReference type="GO" id="GO:0004867">
    <property type="term" value="F:serine-type endopeptidase inhibitor activity"/>
    <property type="evidence" value="ECO:0007669"/>
    <property type="project" value="UniProtKB-KW"/>
</dbReference>
<dbReference type="GO" id="GO:0050832">
    <property type="term" value="P:defense response to fungus"/>
    <property type="evidence" value="ECO:0007669"/>
    <property type="project" value="UniProtKB-KW"/>
</dbReference>
<dbReference type="GO" id="GO:0031640">
    <property type="term" value="P:killing of cells of another organism"/>
    <property type="evidence" value="ECO:0007669"/>
    <property type="project" value="UniProtKB-KW"/>
</dbReference>
<dbReference type="InterPro" id="IPR011065">
    <property type="entry name" value="Kunitz_inhibitor_STI-like_sf"/>
</dbReference>
<dbReference type="SUPFAM" id="SSF50386">
    <property type="entry name" value="STI-like"/>
    <property type="match status" value="1"/>
</dbReference>
<feature type="chain" id="PRO_0000310822" description="Turmerin">
    <location>
        <begin position="1" status="less than"/>
        <end position="85" status="greater than"/>
    </location>
</feature>
<feature type="site" description="Reactive bond for trypsin" evidence="1">
    <location>
        <begin position="57"/>
        <end status="unknown"/>
    </location>
</feature>
<feature type="unsure residue" description="I OR L" evidence="5">
    <location>
        <position position="26"/>
    </location>
</feature>
<feature type="unsure residue" description="I OR L" evidence="5">
    <location>
        <position position="30"/>
    </location>
</feature>
<feature type="unsure residue" description="I OR L" evidence="5">
    <location>
        <position position="36"/>
    </location>
</feature>
<feature type="unsure residue" description="P OR T" evidence="5">
    <location>
        <position position="39"/>
    </location>
</feature>
<feature type="unsure residue" description="I OR L" evidence="5">
    <location>
        <position position="48"/>
    </location>
</feature>
<feature type="unsure residue" description="I OR L" evidence="5">
    <location>
        <position position="51"/>
    </location>
</feature>
<feature type="unsure residue" description="I OR L" evidence="5">
    <location>
        <position position="52"/>
    </location>
</feature>
<feature type="unsure residue" description="I OR L" evidence="5">
    <location>
        <position position="59"/>
    </location>
</feature>
<feature type="unsure residue" description="P OR T" evidence="5">
    <location>
        <position position="64"/>
    </location>
</feature>
<feature type="non-consecutive residues" evidence="6">
    <location>
        <begin position="25"/>
        <end position="26"/>
    </location>
</feature>
<feature type="non-consecutive residues" evidence="6">
    <location>
        <begin position="37"/>
        <end position="38"/>
    </location>
</feature>
<feature type="non-consecutive residues" evidence="6">
    <location>
        <begin position="46"/>
        <end position="47"/>
    </location>
</feature>
<feature type="non-consecutive residues" evidence="6">
    <location>
        <begin position="57"/>
        <end position="58"/>
    </location>
</feature>
<feature type="non-consecutive residues" evidence="6">
    <location>
        <begin position="68"/>
        <end position="69"/>
    </location>
</feature>
<feature type="non-consecutive residues" evidence="6">
    <location>
        <begin position="75"/>
        <end position="76"/>
    </location>
</feature>
<feature type="non-terminal residue" evidence="6">
    <location>
        <position position="1"/>
    </location>
</feature>
<feature type="non-terminal residue" evidence="6">
    <location>
        <position position="85"/>
    </location>
</feature>
<accession>P85278</accession>
<keyword id="KW-0929">Antimicrobial</keyword>
<keyword id="KW-0049">Antioxidant</keyword>
<keyword id="KW-0903">Direct protein sequencing</keyword>
<keyword id="KW-0295">Fungicide</keyword>
<keyword id="KW-0646">Protease inhibitor</keyword>
<keyword id="KW-0722">Serine protease inhibitor</keyword>
<sequence>LCPLDVLQLSSELLDIDGNEVEASRILSDITAFGGIRCPLTVVQSRGIGTIISSPYRFIAEGHPLSLKDMDGWFRVSDDEFNNYK</sequence>
<evidence type="ECO:0000250" key="1">
    <source>
        <dbReference type="UniProtKB" id="P01070"/>
    </source>
</evidence>
<evidence type="ECO:0000255" key="2"/>
<evidence type="ECO:0000269" key="3">
    <source>
    </source>
</evidence>
<evidence type="ECO:0000269" key="4">
    <source>
    </source>
</evidence>
<evidence type="ECO:0000269" key="5">
    <source ref="1"/>
</evidence>
<evidence type="ECO:0000303" key="6">
    <source ref="1"/>
</evidence>
<evidence type="ECO:0000305" key="7"/>
<comment type="function">
    <text evidence="1 3 4 5">Inhibition of trypsin (By similarity). Has anticarcinogenic activity, prevents transformation of DMBA-treated JB6 cells. Has antipromoter activity, prevents promotion by tetradecanoyl phorbal acetate (TPA) in JB6 cells. Prevents tertiary butyl hydroperoxide-induced mutagenesis. Protects AT base pairs and shows antimutagenesis activity in TA102 and TA104 S.typhimurium mutagenesis tests. Inhibits paw edema formation induced by phospholipase A2 in Swiss Wistar mice. Prevents the release of arachidonate, the parent compound for the synthesis of prostaglandins and prostacyclins. Has antimalarial activity, kills P.falciparum. Has antivenom activity, nullifies the lethal effects of N.naja venom and inhibits phospholipase A2 present in N.naja venom. Has antifungal activity, inhibits cilia formation by A.niger. Is not toxic or allergenic.</text>
</comment>
<comment type="biophysicochemical properties">
    <temperatureDependence>
        <text evidence="3">Stable for 7 days at room temperature and for 30 days at 4 degrees Celsius. Remains active after incubation at 100 degrees Celsius for 3 hours.</text>
    </temperatureDependence>
</comment>
<comment type="PTM">
    <text evidence="3">The N-terminus is blocked.</text>
</comment>
<comment type="mass spectrometry"/>
<comment type="similarity">
    <text evidence="2">Belongs to the protease inhibitor I3 (leguminous Kunitz-type inhibitor) family.</text>
</comment>
<comment type="caution">
    <text evidence="5">The order of the first peptide shown is unknown.</text>
</comment>